<comment type="function">
    <text evidence="1">One of two assembly initiator proteins, it binds directly to the 5'-end of the 23S rRNA, where it nucleates assembly of the 50S subunit.</text>
</comment>
<comment type="function">
    <text evidence="1">One of the proteins that surrounds the polypeptide exit tunnel on the outside of the subunit.</text>
</comment>
<comment type="subunit">
    <text evidence="1">Part of the 50S ribosomal subunit.</text>
</comment>
<comment type="similarity">
    <text evidence="1">Belongs to the universal ribosomal protein uL24 family.</text>
</comment>
<gene>
    <name evidence="1" type="primary">rplX</name>
    <name type="ordered locus">LBA0302</name>
</gene>
<accession>Q5FM79</accession>
<proteinExistence type="inferred from homology"/>
<sequence>MFVKTGDKVKVIAGKDKGKEGTVLSVNVKKNRVVVKGVNKIKKHQKPSQTNANGGVVESEGSIHASNVKVISKKEDK</sequence>
<keyword id="KW-1185">Reference proteome</keyword>
<keyword id="KW-0687">Ribonucleoprotein</keyword>
<keyword id="KW-0689">Ribosomal protein</keyword>
<keyword id="KW-0694">RNA-binding</keyword>
<keyword id="KW-0699">rRNA-binding</keyword>
<evidence type="ECO:0000255" key="1">
    <source>
        <dbReference type="HAMAP-Rule" id="MF_01326"/>
    </source>
</evidence>
<evidence type="ECO:0000256" key="2">
    <source>
        <dbReference type="SAM" id="MobiDB-lite"/>
    </source>
</evidence>
<evidence type="ECO:0000305" key="3"/>
<organism>
    <name type="scientific">Lactobacillus acidophilus (strain ATCC 700396 / NCK56 / N2 / NCFM)</name>
    <dbReference type="NCBI Taxonomy" id="272621"/>
    <lineage>
        <taxon>Bacteria</taxon>
        <taxon>Bacillati</taxon>
        <taxon>Bacillota</taxon>
        <taxon>Bacilli</taxon>
        <taxon>Lactobacillales</taxon>
        <taxon>Lactobacillaceae</taxon>
        <taxon>Lactobacillus</taxon>
    </lineage>
</organism>
<feature type="chain" id="PRO_0000241610" description="Large ribosomal subunit protein uL24">
    <location>
        <begin position="1"/>
        <end position="77"/>
    </location>
</feature>
<feature type="region of interest" description="Disordered" evidence="2">
    <location>
        <begin position="42"/>
        <end position="61"/>
    </location>
</feature>
<reference key="1">
    <citation type="journal article" date="2005" name="Proc. Natl. Acad. Sci. U.S.A.">
        <title>Complete genome sequence of the probiotic lactic acid bacterium Lactobacillus acidophilus NCFM.</title>
        <authorList>
            <person name="Altermann E."/>
            <person name="Russell W.M."/>
            <person name="Azcarate-Peril M.A."/>
            <person name="Barrangou R."/>
            <person name="Buck B.L."/>
            <person name="McAuliffe O."/>
            <person name="Souther N."/>
            <person name="Dobson A."/>
            <person name="Duong T."/>
            <person name="Callanan M."/>
            <person name="Lick S."/>
            <person name="Hamrick A."/>
            <person name="Cano R."/>
            <person name="Klaenhammer T.R."/>
        </authorList>
    </citation>
    <scope>NUCLEOTIDE SEQUENCE [LARGE SCALE GENOMIC DNA]</scope>
    <source>
        <strain>ATCC 700396 / NCK56 / N2 / NCFM</strain>
    </source>
</reference>
<protein>
    <recommendedName>
        <fullName evidence="1">Large ribosomal subunit protein uL24</fullName>
    </recommendedName>
    <alternativeName>
        <fullName evidence="3">50S ribosomal protein L24</fullName>
    </alternativeName>
</protein>
<name>RL24_LACAC</name>
<dbReference type="EMBL" id="CP000033">
    <property type="protein sequence ID" value="AAV42195.1"/>
    <property type="molecule type" value="Genomic_DNA"/>
</dbReference>
<dbReference type="RefSeq" id="WP_003549035.1">
    <property type="nucleotide sequence ID" value="NC_006814.3"/>
</dbReference>
<dbReference type="RefSeq" id="YP_193226.1">
    <property type="nucleotide sequence ID" value="NC_006814.3"/>
</dbReference>
<dbReference type="SMR" id="Q5FM79"/>
<dbReference type="STRING" id="272621.LBA0302"/>
<dbReference type="GeneID" id="93290590"/>
<dbReference type="KEGG" id="lac:LBA0302"/>
<dbReference type="PATRIC" id="fig|272621.13.peg.288"/>
<dbReference type="eggNOG" id="COG0198">
    <property type="taxonomic scope" value="Bacteria"/>
</dbReference>
<dbReference type="HOGENOM" id="CLU_093315_2_2_9"/>
<dbReference type="OrthoDB" id="9807419at2"/>
<dbReference type="BioCyc" id="LACI272621:G1G49-296-MONOMER"/>
<dbReference type="PRO" id="PR:Q5FM79"/>
<dbReference type="Proteomes" id="UP000006381">
    <property type="component" value="Chromosome"/>
</dbReference>
<dbReference type="GO" id="GO:1990904">
    <property type="term" value="C:ribonucleoprotein complex"/>
    <property type="evidence" value="ECO:0007669"/>
    <property type="project" value="UniProtKB-KW"/>
</dbReference>
<dbReference type="GO" id="GO:0005840">
    <property type="term" value="C:ribosome"/>
    <property type="evidence" value="ECO:0007669"/>
    <property type="project" value="UniProtKB-KW"/>
</dbReference>
<dbReference type="GO" id="GO:0019843">
    <property type="term" value="F:rRNA binding"/>
    <property type="evidence" value="ECO:0007669"/>
    <property type="project" value="UniProtKB-UniRule"/>
</dbReference>
<dbReference type="GO" id="GO:0003735">
    <property type="term" value="F:structural constituent of ribosome"/>
    <property type="evidence" value="ECO:0007669"/>
    <property type="project" value="InterPro"/>
</dbReference>
<dbReference type="GO" id="GO:0006412">
    <property type="term" value="P:translation"/>
    <property type="evidence" value="ECO:0007669"/>
    <property type="project" value="UniProtKB-UniRule"/>
</dbReference>
<dbReference type="CDD" id="cd06089">
    <property type="entry name" value="KOW_RPL26"/>
    <property type="match status" value="1"/>
</dbReference>
<dbReference type="Gene3D" id="2.30.30.30">
    <property type="match status" value="1"/>
</dbReference>
<dbReference type="HAMAP" id="MF_01326_B">
    <property type="entry name" value="Ribosomal_uL24_B"/>
    <property type="match status" value="1"/>
</dbReference>
<dbReference type="InterPro" id="IPR005824">
    <property type="entry name" value="KOW"/>
</dbReference>
<dbReference type="InterPro" id="IPR014722">
    <property type="entry name" value="Rib_uL2_dom2"/>
</dbReference>
<dbReference type="InterPro" id="IPR003256">
    <property type="entry name" value="Ribosomal_uL24"/>
</dbReference>
<dbReference type="InterPro" id="IPR005825">
    <property type="entry name" value="Ribosomal_uL24_CS"/>
</dbReference>
<dbReference type="InterPro" id="IPR041988">
    <property type="entry name" value="Ribosomal_uL24_KOW"/>
</dbReference>
<dbReference type="InterPro" id="IPR008991">
    <property type="entry name" value="Translation_prot_SH3-like_sf"/>
</dbReference>
<dbReference type="NCBIfam" id="TIGR01079">
    <property type="entry name" value="rplX_bact"/>
    <property type="match status" value="1"/>
</dbReference>
<dbReference type="PANTHER" id="PTHR12903">
    <property type="entry name" value="MITOCHONDRIAL RIBOSOMAL PROTEIN L24"/>
    <property type="match status" value="1"/>
</dbReference>
<dbReference type="Pfam" id="PF00467">
    <property type="entry name" value="KOW"/>
    <property type="match status" value="1"/>
</dbReference>
<dbReference type="Pfam" id="PF17136">
    <property type="entry name" value="ribosomal_L24"/>
    <property type="match status" value="1"/>
</dbReference>
<dbReference type="SMART" id="SM00739">
    <property type="entry name" value="KOW"/>
    <property type="match status" value="1"/>
</dbReference>
<dbReference type="SUPFAM" id="SSF50104">
    <property type="entry name" value="Translation proteins SH3-like domain"/>
    <property type="match status" value="1"/>
</dbReference>
<dbReference type="PROSITE" id="PS01108">
    <property type="entry name" value="RIBOSOMAL_L24"/>
    <property type="match status" value="1"/>
</dbReference>